<name>TASK_HAPIR</name>
<comment type="function">
    <text evidence="5">Amidohydrolase; part of the gene cluster that mediates the biosynthesis of the tetramic acids Sch210971 and Sch210972, potential anti-HIV fungal natural product that contain a decalin core (PubMed:25885659). The PKS module of tasS together with the enoylreductase tasC catalyze the formation of the polyketide unit which is then conjugated to 4-hydroxyl-4-methyl glutamate (HMG) by the condensation domain of the tasS NRPS module (PubMed:25885659). One unique structural feature of Sch210971 and Sch210972 is the tetramic acid motif proposed to be derived from the non-proteinogenic amino acid HMG, by a Dieckmann-type condensation catalyzed by the reductase domain of tasS (PubMed:25885659). The aldolase tasA catalyzes the aldol condensation of 2 molecules of pyruvic acid to yield the intermediate 4-hydroxyl-4-methyl-2-oxoglutarate (HMOG), which can then be stereoselectively transaminated, may be by tasG, to form HMG (PubMed:25885659). The Diels-Alderase tas3 then uses the Dieckmann product of tasS as substrate and catalyzes the Diels-Alder cycloaddition to form the decalin ring of Sch210971 and Sch210972 (PubMed:25885659).</text>
</comment>
<comment type="cofactor">
    <cofactor evidence="1">
        <name>Fe(2+)</name>
        <dbReference type="ChEBI" id="CHEBI:29033"/>
    </cofactor>
    <cofactor evidence="1">
        <name>Mn(2+)</name>
        <dbReference type="ChEBI" id="CHEBI:29035"/>
    </cofactor>
    <cofactor evidence="1">
        <name>Zn(2+)</name>
        <dbReference type="ChEBI" id="CHEBI:29105"/>
    </cofactor>
</comment>
<comment type="subcellular location">
    <subcellularLocation>
        <location evidence="2">Membrane</location>
        <topology evidence="2">Single-pass membrane protein</topology>
    </subcellularLocation>
</comment>
<comment type="similarity">
    <text evidence="7">Belongs to the metallo-dependent hydrolases superfamily.</text>
</comment>
<evidence type="ECO:0000250" key="1">
    <source>
        <dbReference type="UniProtKB" id="P25524"/>
    </source>
</evidence>
<evidence type="ECO:0000255" key="2"/>
<evidence type="ECO:0000255" key="3">
    <source>
        <dbReference type="PROSITE-ProRule" id="PRU00498"/>
    </source>
</evidence>
<evidence type="ECO:0000256" key="4">
    <source>
        <dbReference type="SAM" id="MobiDB-lite"/>
    </source>
</evidence>
<evidence type="ECO:0000269" key="5">
    <source>
    </source>
</evidence>
<evidence type="ECO:0000303" key="6">
    <source>
    </source>
</evidence>
<evidence type="ECO:0000305" key="7"/>
<evidence type="ECO:0000305" key="8">
    <source>
    </source>
</evidence>
<organism>
    <name type="scientific">Hapsidospora irregularis</name>
    <dbReference type="NCBI Taxonomy" id="95324"/>
    <lineage>
        <taxon>Eukaryota</taxon>
        <taxon>Fungi</taxon>
        <taxon>Dikarya</taxon>
        <taxon>Ascomycota</taxon>
        <taxon>Pezizomycotina</taxon>
        <taxon>Sordariomycetes</taxon>
        <taxon>Hypocreomycetidae</taxon>
        <taxon>Hypocreales</taxon>
        <taxon>Bionectriaceae</taxon>
        <taxon>Hapsidospora</taxon>
    </lineage>
</organism>
<feature type="chain" id="PRO_0000453358" description="Amidohydrolase tasK">
    <location>
        <begin position="1"/>
        <end position="981"/>
    </location>
</feature>
<feature type="transmembrane region" description="Helical" evidence="2">
    <location>
        <begin position="40"/>
        <end position="57"/>
    </location>
</feature>
<feature type="region of interest" description="Disordered" evidence="4">
    <location>
        <begin position="1"/>
        <end position="36"/>
    </location>
</feature>
<feature type="region of interest" description="Disordered" evidence="4">
    <location>
        <begin position="86"/>
        <end position="107"/>
    </location>
</feature>
<feature type="region of interest" description="Disordered" evidence="4">
    <location>
        <begin position="819"/>
        <end position="838"/>
    </location>
</feature>
<feature type="compositionally biased region" description="Pro residues" evidence="4">
    <location>
        <begin position="7"/>
        <end position="21"/>
    </location>
</feature>
<feature type="compositionally biased region" description="Basic residues" evidence="4">
    <location>
        <begin position="24"/>
        <end position="36"/>
    </location>
</feature>
<feature type="compositionally biased region" description="Low complexity" evidence="4">
    <location>
        <begin position="823"/>
        <end position="835"/>
    </location>
</feature>
<feature type="binding site" evidence="1">
    <location>
        <position position="187"/>
    </location>
    <ligand>
        <name>Fe(2+)</name>
        <dbReference type="ChEBI" id="CHEBI:29033"/>
        <note>catalytic</note>
    </ligand>
</feature>
<feature type="binding site" evidence="1">
    <location>
        <position position="187"/>
    </location>
    <ligand>
        <name>Zn(2+)</name>
        <dbReference type="ChEBI" id="CHEBI:29105"/>
        <note>catalytic</note>
    </ligand>
</feature>
<feature type="binding site" evidence="1">
    <location>
        <position position="189"/>
    </location>
    <ligand>
        <name>Fe(2+)</name>
        <dbReference type="ChEBI" id="CHEBI:29033"/>
        <note>catalytic</note>
    </ligand>
</feature>
<feature type="binding site" evidence="1">
    <location>
        <position position="189"/>
    </location>
    <ligand>
        <name>Zn(2+)</name>
        <dbReference type="ChEBI" id="CHEBI:29105"/>
        <note>catalytic</note>
    </ligand>
</feature>
<feature type="glycosylation site" description="N-linked (GlcNAc...) asparagine" evidence="3">
    <location>
        <position position="407"/>
    </location>
</feature>
<feature type="glycosylation site" description="N-linked (GlcNAc...) asparagine" evidence="3">
    <location>
        <position position="891"/>
    </location>
</feature>
<accession>A0A0F7GG06</accession>
<dbReference type="EC" id="3.5.4.-" evidence="8"/>
<dbReference type="EMBL" id="KP835202">
    <property type="protein sequence ID" value="AKG54855.1"/>
    <property type="molecule type" value="Genomic_DNA"/>
</dbReference>
<dbReference type="SMR" id="A0A0F7GG06"/>
<dbReference type="GlyCosmos" id="A0A0F7GG06">
    <property type="glycosylation" value="2 sites, No reported glycans"/>
</dbReference>
<dbReference type="GO" id="GO:0016020">
    <property type="term" value="C:membrane"/>
    <property type="evidence" value="ECO:0007669"/>
    <property type="project" value="UniProtKB-SubCell"/>
</dbReference>
<dbReference type="GO" id="GO:0046872">
    <property type="term" value="F:metal ion binding"/>
    <property type="evidence" value="ECO:0007669"/>
    <property type="project" value="UniProtKB-KW"/>
</dbReference>
<dbReference type="GO" id="GO:0008448">
    <property type="term" value="F:N-acetylglucosamine-6-phosphate deacetylase activity"/>
    <property type="evidence" value="ECO:0007669"/>
    <property type="project" value="TreeGrafter"/>
</dbReference>
<dbReference type="GO" id="GO:0006046">
    <property type="term" value="P:N-acetylglucosamine catabolic process"/>
    <property type="evidence" value="ECO:0007669"/>
    <property type="project" value="TreeGrafter"/>
</dbReference>
<dbReference type="Gene3D" id="3.20.20.140">
    <property type="entry name" value="Metal-dependent hydrolases"/>
    <property type="match status" value="2"/>
</dbReference>
<dbReference type="InterPro" id="IPR006680">
    <property type="entry name" value="Amidohydro-rel"/>
</dbReference>
<dbReference type="InterPro" id="IPR011059">
    <property type="entry name" value="Metal-dep_hydrolase_composite"/>
</dbReference>
<dbReference type="InterPro" id="IPR032466">
    <property type="entry name" value="Metal_Hydrolase"/>
</dbReference>
<dbReference type="PANTHER" id="PTHR11113">
    <property type="entry name" value="N-ACETYLGLUCOSAMINE-6-PHOSPHATE DEACETYLASE"/>
    <property type="match status" value="1"/>
</dbReference>
<dbReference type="PANTHER" id="PTHR11113:SF14">
    <property type="entry name" value="N-ACETYLGLUCOSAMINE-6-PHOSPHATE DEACETYLASE"/>
    <property type="match status" value="1"/>
</dbReference>
<dbReference type="Pfam" id="PF01979">
    <property type="entry name" value="Amidohydro_1"/>
    <property type="match status" value="1"/>
</dbReference>
<dbReference type="SUPFAM" id="SSF51338">
    <property type="entry name" value="Composite domain of metallo-dependent hydrolases"/>
    <property type="match status" value="1"/>
</dbReference>
<dbReference type="SUPFAM" id="SSF51556">
    <property type="entry name" value="Metallo-dependent hydrolases"/>
    <property type="match status" value="1"/>
</dbReference>
<sequence length="981" mass="105554">MDDQKGPLPPYTPTATAPPPASMRQRRPPGRRRALRRSRTVRVLALACLAFVVLAQWKQLWRGERKAPPYLSVDKLNDNLETCRKLRVRPQDPAGPGRSKNDRYLDGGGKPTLIRNALIWTGEPVPGTSDEDARAGVGWAWWLGDVLVERGLITKVDNKMPASEVPEDAIIYDAEGRRLTSGIVDMHSHAGVSPLPGLNGNDDTNEASDNITPWARSIDGLFPLDPQIQVIKSGGVTSSLILPGSANNIGGEAFLIKHAVGRHDGRPELSAASMLADPDRTWRYMKMACGENAKRVHGSRTTRPVTRMGESYDFRRAFERASQLVRRQDDWCDRAGEVGVGSMDEYLPEDLEWEALGAALRGQVHVNAHCYTVNDLEAMVDHSNEFEFPIRAFHHAHQAHLVPEILNRTWGGRPPALAIFADNMYYKAEAYIGTPSAGKMLYDQGLTPIYVSDNPVLNAQHVVLEAAKGFHYGLPYHAALASVTTAPADTLGMGQRLGKIKAGFDADIVVWDSDPLGVGAAPVQVWIDGTAQFDDPVVLSKPHARAEKDTVVVPDAPPPVVVEEPVEVADVLFRGVTRVLLDEHDVSAEDGASLNVAIRGGRISCIGECADEFRVAIDAGVGVVTLGNGHLHKTFVGVGGTLGLNEIDGESKTGNGKNPKTFTRAVDGLLLGGKKLRAAHHAGVTRAISAPRFKGGGNTHHGTSVGIVTSARTSLDAGAIFGNGDVAVHYTLDLSVRGGDDESYSAAFGSLREKLIRAGVHGGKEKEVGAEEVGAEEEEEEEEKAFLRRVLASEMVLALTINSADGIATALRIKDEVDKKQQKQQQQQQQQQQQQHGTSSGIRMAIIGGAEAYLVAEHLAAANVGVILSPLQSYGETWDARRALPGAPLTNGTNIDRLLDAGVKVGIGLKEDWEVRDLALAAGTAYENGGGRLTGRQALDLVGRNVLEILGVEEEEETPGATMGESGHFVVLLIINMFCGL</sequence>
<protein>
    <recommendedName>
        <fullName evidence="6">Amidohydrolase tasK</fullName>
        <ecNumber evidence="8">3.5.4.-</ecNumber>
    </recommendedName>
    <alternativeName>
        <fullName evidence="6">Tetramic acid Sch210971/2 biosynthesis cluster protein K</fullName>
    </alternativeName>
</protein>
<proteinExistence type="inferred from homology"/>
<gene>
    <name evidence="6" type="primary">tasK</name>
</gene>
<reference key="1">
    <citation type="journal article" date="2015" name="Org. Lett.">
        <title>Biosynthesis of the tetramic acids Sch210971 and Sch210972.</title>
        <authorList>
            <person name="Kakule T.B."/>
            <person name="Zhang S."/>
            <person name="Zhan J."/>
            <person name="Schmidt E.W."/>
        </authorList>
    </citation>
    <scope>NUCLEOTIDE SEQUENCE [GENOMIC DNA]</scope>
    <scope>FUNCTION</scope>
</reference>
<keyword id="KW-0325">Glycoprotein</keyword>
<keyword id="KW-0378">Hydrolase</keyword>
<keyword id="KW-0408">Iron</keyword>
<keyword id="KW-0464">Manganese</keyword>
<keyword id="KW-0472">Membrane</keyword>
<keyword id="KW-0479">Metal-binding</keyword>
<keyword id="KW-0812">Transmembrane</keyword>
<keyword id="KW-1133">Transmembrane helix</keyword>
<keyword id="KW-0862">Zinc</keyword>